<feature type="chain" id="PRO_0000095565" description="Ferric uptake regulation protein">
    <location>
        <begin position="1"/>
        <end position="144"/>
    </location>
</feature>
<feature type="region of interest" description="DNA-binding" evidence="1">
    <location>
        <begin position="1"/>
        <end position="86"/>
    </location>
</feature>
<feature type="region of interest" description="Dimerization" evidence="1">
    <location>
        <begin position="87"/>
        <end position="144"/>
    </location>
</feature>
<feature type="binding site" evidence="1">
    <location>
        <position position="35"/>
    </location>
    <ligand>
        <name>Zn(2+)</name>
        <dbReference type="ChEBI" id="CHEBI:29105"/>
    </ligand>
</feature>
<feature type="binding site" evidence="1">
    <location>
        <position position="83"/>
    </location>
    <ligand>
        <name>Zn(2+)</name>
        <dbReference type="ChEBI" id="CHEBI:29105"/>
    </ligand>
</feature>
<feature type="binding site" evidence="1">
    <location>
        <position position="89"/>
    </location>
    <ligand>
        <name>Fe cation</name>
        <dbReference type="ChEBI" id="CHEBI:24875"/>
    </ligand>
</feature>
<feature type="binding site" evidence="1">
    <location>
        <position position="91"/>
    </location>
    <ligand>
        <name>Fe cation</name>
        <dbReference type="ChEBI" id="CHEBI:24875"/>
    </ligand>
</feature>
<feature type="binding site" evidence="1">
    <location>
        <position position="92"/>
    </location>
    <ligand>
        <name>Zn(2+)</name>
        <dbReference type="ChEBI" id="CHEBI:29105"/>
    </ligand>
</feature>
<feature type="binding site" evidence="1">
    <location>
        <position position="95"/>
    </location>
    <ligand>
        <name>Zn(2+)</name>
        <dbReference type="ChEBI" id="CHEBI:29105"/>
    </ligand>
</feature>
<feature type="binding site" evidence="1">
    <location>
        <position position="98"/>
    </location>
    <ligand>
        <name>Zn(2+)</name>
        <dbReference type="ChEBI" id="CHEBI:29105"/>
    </ligand>
</feature>
<feature type="binding site" evidence="1">
    <location>
        <position position="103"/>
    </location>
    <ligand>
        <name>Zn(2+)</name>
        <dbReference type="ChEBI" id="CHEBI:29105"/>
    </ligand>
</feature>
<feature type="binding site" evidence="1">
    <location>
        <position position="110"/>
    </location>
    <ligand>
        <name>Fe cation</name>
        <dbReference type="ChEBI" id="CHEBI:24875"/>
    </ligand>
</feature>
<feature type="binding site" evidence="1">
    <location>
        <position position="127"/>
    </location>
    <ligand>
        <name>Fe cation</name>
        <dbReference type="ChEBI" id="CHEBI:24875"/>
    </ligand>
</feature>
<feature type="sequence variant" description="In strain: CCUG 37603.">
    <original>N</original>
    <variation>S</variation>
    <location>
        <position position="5"/>
    </location>
</feature>
<organism>
    <name type="scientific">Neisseria meningitidis serogroup B (strain ATCC BAA-335 / MC58)</name>
    <dbReference type="NCBI Taxonomy" id="122586"/>
    <lineage>
        <taxon>Bacteria</taxon>
        <taxon>Pseudomonadati</taxon>
        <taxon>Pseudomonadota</taxon>
        <taxon>Betaproteobacteria</taxon>
        <taxon>Neisseriales</taxon>
        <taxon>Neisseriaceae</taxon>
        <taxon>Neisseria</taxon>
    </lineage>
</organism>
<name>FUR_NEIMB</name>
<comment type="function">
    <text>Acts as a global negative controlling element, employing Fe(2+) as a cofactor to bind the operator of the repressed genes. Regulates the expression of the fbp protein.</text>
</comment>
<comment type="subunit">
    <text evidence="1">Homodimer.</text>
</comment>
<comment type="subcellular location">
    <subcellularLocation>
        <location evidence="1">Cytoplasm</location>
    </subcellularLocation>
</comment>
<comment type="similarity">
    <text evidence="2">Belongs to the Fur family.</text>
</comment>
<reference key="1">
    <citation type="journal article" date="1994" name="Gene">
        <title>Cloning and sequence analysis of the fur gene encoding an iron-regulatory protein of Neisseria meningitidis.</title>
        <authorList>
            <person name="Karkhoff-Schweizer R.R."/>
            <person name="Schryvers A.B."/>
            <person name="Schweizer H.P."/>
        </authorList>
    </citation>
    <scope>NUCLEOTIDE SEQUENCE [GENOMIC DNA]</scope>
    <source>
        <strain>CCUG 37603 / B16B6 / Serogroup B / Serotype 2a</strain>
    </source>
</reference>
<reference key="2">
    <citation type="journal article" date="2000" name="Science">
        <title>Complete genome sequence of Neisseria meningitidis serogroup B strain MC58.</title>
        <authorList>
            <person name="Tettelin H."/>
            <person name="Saunders N.J."/>
            <person name="Heidelberg J.F."/>
            <person name="Jeffries A.C."/>
            <person name="Nelson K.E."/>
            <person name="Eisen J.A."/>
            <person name="Ketchum K.A."/>
            <person name="Hood D.W."/>
            <person name="Peden J.F."/>
            <person name="Dodson R.J."/>
            <person name="Nelson W.C."/>
            <person name="Gwinn M.L."/>
            <person name="DeBoy R.T."/>
            <person name="Peterson J.D."/>
            <person name="Hickey E.K."/>
            <person name="Haft D.H."/>
            <person name="Salzberg S.L."/>
            <person name="White O."/>
            <person name="Fleischmann R.D."/>
            <person name="Dougherty B.A."/>
            <person name="Mason T.M."/>
            <person name="Ciecko A."/>
            <person name="Parksey D.S."/>
            <person name="Blair E."/>
            <person name="Cittone H."/>
            <person name="Clark E.B."/>
            <person name="Cotton M.D."/>
            <person name="Utterback T.R."/>
            <person name="Khouri H.M."/>
            <person name="Qin H."/>
            <person name="Vamathevan J.J."/>
            <person name="Gill J."/>
            <person name="Scarlato V."/>
            <person name="Masignani V."/>
            <person name="Pizza M."/>
            <person name="Grandi G."/>
            <person name="Sun L."/>
            <person name="Smith H.O."/>
            <person name="Fraser C.M."/>
            <person name="Moxon E.R."/>
            <person name="Rappuoli R."/>
            <person name="Venter J.C."/>
        </authorList>
    </citation>
    <scope>NUCLEOTIDE SEQUENCE [LARGE SCALE GENOMIC DNA]</scope>
    <source>
        <strain>ATCC BAA-335 / MC58</strain>
    </source>
</reference>
<accession>P0A0S8</accession>
<accession>Q57298</accession>
<proteinExistence type="inferred from homology"/>
<sequence>MEKFNNIAQLKDSGLKVTGPRLKILDLFETHAEEHLSAEDVYRILLEEGVEIGVATIYRVLTQFEQAGILQRHHFETGKAVYELDKGDHHDHIVCVKCGEVTEFHNPEIEALQDKIAEENGYRIVDHALYMYGVCSDCQAKGKR</sequence>
<dbReference type="EMBL" id="U01151">
    <property type="protein sequence ID" value="AAC13744.1"/>
    <property type="molecule type" value="Unassigned_DNA"/>
</dbReference>
<dbReference type="EMBL" id="AE002098">
    <property type="protein sequence ID" value="AAF40662.1"/>
    <property type="molecule type" value="Genomic_DNA"/>
</dbReference>
<dbReference type="PIR" id="G81226">
    <property type="entry name" value="G81226"/>
</dbReference>
<dbReference type="RefSeq" id="NP_273263.1">
    <property type="nucleotide sequence ID" value="NC_003112.2"/>
</dbReference>
<dbReference type="RefSeq" id="WP_002218609.1">
    <property type="nucleotide sequence ID" value="NC_003112.2"/>
</dbReference>
<dbReference type="SMR" id="P0A0S8"/>
<dbReference type="FunCoup" id="P0A0S8">
    <property type="interactions" value="487"/>
</dbReference>
<dbReference type="STRING" id="122586.NMB0205"/>
<dbReference type="PaxDb" id="122586-NMB0205"/>
<dbReference type="GeneID" id="93387283"/>
<dbReference type="KEGG" id="nme:NMB0205"/>
<dbReference type="PATRIC" id="fig|122586.8.peg.254"/>
<dbReference type="HOGENOM" id="CLU_096072_3_3_4"/>
<dbReference type="InParanoid" id="P0A0S8"/>
<dbReference type="OrthoDB" id="8659436at2"/>
<dbReference type="Proteomes" id="UP000000425">
    <property type="component" value="Chromosome"/>
</dbReference>
<dbReference type="CollecTF" id="EXPREG_000006e0"/>
<dbReference type="GO" id="GO:0005829">
    <property type="term" value="C:cytosol"/>
    <property type="evidence" value="ECO:0000318"/>
    <property type="project" value="GO_Central"/>
</dbReference>
<dbReference type="GO" id="GO:0032993">
    <property type="term" value="C:protein-DNA complex"/>
    <property type="evidence" value="ECO:0000353"/>
    <property type="project" value="CollecTF"/>
</dbReference>
<dbReference type="GO" id="GO:0001216">
    <property type="term" value="F:DNA-binding transcription activator activity"/>
    <property type="evidence" value="ECO:0000353"/>
    <property type="project" value="CollecTF"/>
</dbReference>
<dbReference type="GO" id="GO:0003700">
    <property type="term" value="F:DNA-binding transcription factor activity"/>
    <property type="evidence" value="ECO:0000318"/>
    <property type="project" value="GO_Central"/>
</dbReference>
<dbReference type="GO" id="GO:0001217">
    <property type="term" value="F:DNA-binding transcription repressor activity"/>
    <property type="evidence" value="ECO:0000353"/>
    <property type="project" value="CollecTF"/>
</dbReference>
<dbReference type="GO" id="GO:0000976">
    <property type="term" value="F:transcription cis-regulatory region binding"/>
    <property type="evidence" value="ECO:0000353"/>
    <property type="project" value="CollecTF"/>
</dbReference>
<dbReference type="GO" id="GO:0008270">
    <property type="term" value="F:zinc ion binding"/>
    <property type="evidence" value="ECO:0000318"/>
    <property type="project" value="GO_Central"/>
</dbReference>
<dbReference type="GO" id="GO:0071281">
    <property type="term" value="P:cellular response to iron ion"/>
    <property type="evidence" value="ECO:0000270"/>
    <property type="project" value="CollecTF"/>
</dbReference>
<dbReference type="GO" id="GO:0045892">
    <property type="term" value="P:negative regulation of DNA-templated transcription"/>
    <property type="evidence" value="ECO:0000270"/>
    <property type="project" value="CollecTF"/>
</dbReference>
<dbReference type="GO" id="GO:1900705">
    <property type="term" value="P:negative regulation of siderophore biosynthetic process"/>
    <property type="evidence" value="ECO:0000318"/>
    <property type="project" value="GO_Central"/>
</dbReference>
<dbReference type="GO" id="GO:0045893">
    <property type="term" value="P:positive regulation of DNA-templated transcription"/>
    <property type="evidence" value="ECO:0000269"/>
    <property type="project" value="CollecTF"/>
</dbReference>
<dbReference type="GO" id="GO:0006355">
    <property type="term" value="P:regulation of DNA-templated transcription"/>
    <property type="evidence" value="ECO:0000270"/>
    <property type="project" value="CollecTF"/>
</dbReference>
<dbReference type="CDD" id="cd07153">
    <property type="entry name" value="Fur_like"/>
    <property type="match status" value="1"/>
</dbReference>
<dbReference type="FunFam" id="1.10.10.10:FF:000007">
    <property type="entry name" value="Ferric uptake regulation protein"/>
    <property type="match status" value="1"/>
</dbReference>
<dbReference type="FunFam" id="3.30.1490.190:FF:000001">
    <property type="entry name" value="Ferric uptake regulation protein"/>
    <property type="match status" value="1"/>
</dbReference>
<dbReference type="Gene3D" id="3.30.1490.190">
    <property type="match status" value="1"/>
</dbReference>
<dbReference type="Gene3D" id="1.10.10.10">
    <property type="entry name" value="Winged helix-like DNA-binding domain superfamily/Winged helix DNA-binding domain"/>
    <property type="match status" value="1"/>
</dbReference>
<dbReference type="InterPro" id="IPR002481">
    <property type="entry name" value="FUR"/>
</dbReference>
<dbReference type="InterPro" id="IPR043135">
    <property type="entry name" value="Fur_C"/>
</dbReference>
<dbReference type="InterPro" id="IPR036388">
    <property type="entry name" value="WH-like_DNA-bd_sf"/>
</dbReference>
<dbReference type="InterPro" id="IPR036390">
    <property type="entry name" value="WH_DNA-bd_sf"/>
</dbReference>
<dbReference type="NCBIfam" id="NF006999">
    <property type="entry name" value="PRK09462.1"/>
    <property type="match status" value="1"/>
</dbReference>
<dbReference type="PANTHER" id="PTHR33202:SF2">
    <property type="entry name" value="FERRIC UPTAKE REGULATION PROTEIN"/>
    <property type="match status" value="1"/>
</dbReference>
<dbReference type="PANTHER" id="PTHR33202">
    <property type="entry name" value="ZINC UPTAKE REGULATION PROTEIN"/>
    <property type="match status" value="1"/>
</dbReference>
<dbReference type="Pfam" id="PF01475">
    <property type="entry name" value="FUR"/>
    <property type="match status" value="1"/>
</dbReference>
<dbReference type="SUPFAM" id="SSF46785">
    <property type="entry name" value="Winged helix' DNA-binding domain"/>
    <property type="match status" value="1"/>
</dbReference>
<keyword id="KW-0963">Cytoplasm</keyword>
<keyword id="KW-0238">DNA-binding</keyword>
<keyword id="KW-0408">Iron</keyword>
<keyword id="KW-0479">Metal-binding</keyword>
<keyword id="KW-1185">Reference proteome</keyword>
<keyword id="KW-0678">Repressor</keyword>
<keyword id="KW-0804">Transcription</keyword>
<keyword id="KW-0805">Transcription regulation</keyword>
<keyword id="KW-0862">Zinc</keyword>
<gene>
    <name type="primary">fur</name>
    <name type="ordered locus">NMB0205</name>
</gene>
<evidence type="ECO:0000250" key="1"/>
<evidence type="ECO:0000305" key="2"/>
<protein>
    <recommendedName>
        <fullName>Ferric uptake regulation protein</fullName>
        <shortName>Ferric uptake regulator</shortName>
    </recommendedName>
</protein>